<accession>P19259</accession>
<evidence type="ECO:0000250" key="1"/>
<evidence type="ECO:0000255" key="2"/>
<evidence type="ECO:0007829" key="3">
    <source>
        <dbReference type="PDB" id="2LOE"/>
    </source>
</evidence>
<reference key="1">
    <citation type="journal article" date="1990" name="Proc. Natl. Acad. Sci. U.S.A.">
        <title>Genes for Plasmodium falciparum surface antigens cloned by expression in COS cells.</title>
        <authorList>
            <person name="Elliott J.F."/>
            <person name="Albrecht G.R."/>
            <person name="Gilladoga A."/>
            <person name="Handunnetti S.M."/>
            <person name="Neequaye J."/>
            <person name="Lallinger G."/>
            <person name="Minjas J.N."/>
            <person name="Howard R.J."/>
        </authorList>
    </citation>
    <scope>NUCLEOTIDE SEQUENCE [GENOMIC DNA]</scope>
</reference>
<reference key="2">
    <citation type="journal article" date="2012" name="Proc. Natl. Acad. Sci. U.S.A.">
        <title>Structure of the Plasmodium 6-cysteine s48/45 domain.</title>
        <authorList>
            <person name="Arredondo S.A."/>
            <person name="Cai M."/>
            <person name="Takayama Y."/>
            <person name="MacDonald N.J."/>
            <person name="Anderson D.E."/>
            <person name="Aravind L."/>
            <person name="Clore G.M."/>
            <person name="Miller L.H."/>
        </authorList>
    </citation>
    <scope>STRUCTURE BY NMR OF 174-300 AND DISULFIDE BONDS</scope>
</reference>
<name>PF12_PLAFA</name>
<organism>
    <name type="scientific">Plasmodium falciparum</name>
    <dbReference type="NCBI Taxonomy" id="5833"/>
    <lineage>
        <taxon>Eukaryota</taxon>
        <taxon>Sar</taxon>
        <taxon>Alveolata</taxon>
        <taxon>Apicomplexa</taxon>
        <taxon>Aconoidasida</taxon>
        <taxon>Haemosporida</taxon>
        <taxon>Plasmodiidae</taxon>
        <taxon>Plasmodium</taxon>
        <taxon>Plasmodium (Laverania)</taxon>
    </lineage>
</organism>
<comment type="subunit">
    <text evidence="1">Heterodimer; heterodimerizes with PF41. May form an antiparallel heterodimer with PF41 (By similarity).</text>
</comment>
<comment type="subcellular location">
    <subcellularLocation>
        <location>Cell surface</location>
    </subcellularLocation>
    <subcellularLocation>
        <location evidence="1">Cell membrane</location>
        <topology evidence="1">Lipid-anchor</topology>
        <topology evidence="1">GPI-anchor</topology>
    </subcellularLocation>
    <text evidence="1">Present on the surface of merozoite.</text>
</comment>
<gene>
    <name type="primary">PF12</name>
</gene>
<sequence>MIKLSKKYCLGISFVLYILLSVCEGHKNLTCDFNDVYKLEFHPNQQTSVTKLCNVTPNVLEKVTIKCGSDKLNYNLYPPTCFEEVYASRNMMHLKKIKEFVIGSSMFMRRSLTPNKINEVSFRIPPNMMPEKPIYCFCENKKTITINGSNGNPSSKKDIINRGIVEIIIPSLNEKVKGCDFTTSESTIFSKGYSINEISNKSSNNQQDIVCTVKAHANDLIGFKCPSNYSVEPHDCFVSAFNLSGKNENLENKLKLTNIIMDHYNNTFYSRLPSLISDNWKFFCVCSKDNEKKLVFTVEASISSSNTKLASRYNTYQDYISNSSFLTLSSYCAFITFIITSFLSFIL</sequence>
<proteinExistence type="evidence at protein level"/>
<protein>
    <recommendedName>
        <fullName>Merozoite surface protein P12</fullName>
    </recommendedName>
</protein>
<feature type="signal peptide" description="Or 25" evidence="2">
    <location>
        <begin position="1"/>
        <end position="23"/>
    </location>
</feature>
<feature type="chain" id="PRO_0000024606" description="Merozoite surface protein P12">
    <location>
        <begin position="24"/>
        <end position="322"/>
    </location>
</feature>
<feature type="propeptide" id="PRO_0000024607" description="Removed in mature form" evidence="2">
    <location>
        <begin position="323"/>
        <end position="347"/>
    </location>
</feature>
<feature type="domain" description="6-Cys 1">
    <location>
        <begin position="27"/>
        <end position="172"/>
    </location>
</feature>
<feature type="domain" description="6-Cys 2">
    <location>
        <begin position="175"/>
        <end position="305"/>
    </location>
</feature>
<feature type="lipid moiety-binding region" description="GPI-anchor amidated asparagine" evidence="2">
    <location>
        <position position="322"/>
    </location>
</feature>
<feature type="glycosylation site" description="N-linked (GlcNAc...) asparagine" evidence="2">
    <location>
        <position position="28"/>
    </location>
</feature>
<feature type="glycosylation site" description="N-linked (GlcNAc...) asparagine" evidence="2">
    <location>
        <position position="147"/>
    </location>
</feature>
<feature type="glycosylation site" description="N-linked (GlcNAc...) asparagine" evidence="2">
    <location>
        <position position="200"/>
    </location>
</feature>
<feature type="glycosylation site" description="N-linked (GlcNAc...) asparagine" evidence="2">
    <location>
        <position position="228"/>
    </location>
</feature>
<feature type="glycosylation site" description="N-linked (GlcNAc...) asparagine" evidence="2">
    <location>
        <position position="242"/>
    </location>
</feature>
<feature type="glycosylation site" description="N-linked (GlcNAc...) asparagine" evidence="2">
    <location>
        <position position="265"/>
    </location>
</feature>
<feature type="glycosylation site" description="N-linked (GlcNAc...) asparagine" evidence="2">
    <location>
        <position position="322"/>
    </location>
</feature>
<feature type="disulfide bond" evidence="1">
    <location>
        <begin position="31"/>
        <end position="53"/>
    </location>
</feature>
<feature type="disulfide bond" evidence="1">
    <location>
        <begin position="67"/>
        <end position="138"/>
    </location>
</feature>
<feature type="disulfide bond" evidence="1">
    <location>
        <begin position="81"/>
        <end position="136"/>
    </location>
</feature>
<feature type="disulfide bond">
    <location>
        <begin position="179"/>
        <end position="211"/>
    </location>
</feature>
<feature type="disulfide bond">
    <location>
        <begin position="225"/>
        <end position="286"/>
    </location>
</feature>
<feature type="disulfide bond">
    <location>
        <begin position="236"/>
        <end position="284"/>
    </location>
</feature>
<feature type="strand" evidence="3">
    <location>
        <begin position="176"/>
        <end position="182"/>
    </location>
</feature>
<feature type="strand" evidence="3">
    <location>
        <begin position="187"/>
        <end position="192"/>
    </location>
</feature>
<feature type="turn" evidence="3">
    <location>
        <begin position="195"/>
        <end position="199"/>
    </location>
</feature>
<feature type="strand" evidence="3">
    <location>
        <begin position="203"/>
        <end position="207"/>
    </location>
</feature>
<feature type="strand" evidence="3">
    <location>
        <begin position="209"/>
        <end position="214"/>
    </location>
</feature>
<feature type="strand" evidence="3">
    <location>
        <begin position="217"/>
        <end position="219"/>
    </location>
</feature>
<feature type="strand" evidence="3">
    <location>
        <begin position="221"/>
        <end position="224"/>
    </location>
</feature>
<feature type="strand" evidence="3">
    <location>
        <begin position="229"/>
        <end position="235"/>
    </location>
</feature>
<feature type="strand" evidence="3">
    <location>
        <begin position="237"/>
        <end position="239"/>
    </location>
</feature>
<feature type="turn" evidence="3">
    <location>
        <begin position="251"/>
        <end position="253"/>
    </location>
</feature>
<feature type="strand" evidence="3">
    <location>
        <begin position="257"/>
        <end position="262"/>
    </location>
</feature>
<feature type="turn" evidence="3">
    <location>
        <begin position="263"/>
        <end position="266"/>
    </location>
</feature>
<feature type="strand" evidence="3">
    <location>
        <begin position="267"/>
        <end position="271"/>
    </location>
</feature>
<feature type="strand" evidence="3">
    <location>
        <begin position="281"/>
        <end position="287"/>
    </location>
</feature>
<feature type="strand" evidence="3">
    <location>
        <begin position="294"/>
        <end position="299"/>
    </location>
</feature>
<keyword id="KW-0002">3D-structure</keyword>
<keyword id="KW-1003">Cell membrane</keyword>
<keyword id="KW-1015">Disulfide bond</keyword>
<keyword id="KW-0325">Glycoprotein</keyword>
<keyword id="KW-0336">GPI-anchor</keyword>
<keyword id="KW-0449">Lipoprotein</keyword>
<keyword id="KW-0461">Malaria</keyword>
<keyword id="KW-0472">Membrane</keyword>
<keyword id="KW-0677">Repeat</keyword>
<keyword id="KW-0732">Signal</keyword>
<dbReference type="EMBL" id="M28889">
    <property type="protein sequence ID" value="AAA29649.1"/>
    <property type="molecule type" value="Genomic_DNA"/>
</dbReference>
<dbReference type="PIR" id="B36018">
    <property type="entry name" value="B36018"/>
</dbReference>
<dbReference type="PDB" id="2LOE">
    <property type="method" value="NMR"/>
    <property type="chains" value="A=174-300"/>
</dbReference>
<dbReference type="PDBsum" id="2LOE"/>
<dbReference type="BMRB" id="P19259"/>
<dbReference type="SMR" id="P19259"/>
<dbReference type="GlyCosmos" id="P19259">
    <property type="glycosylation" value="7 sites, No reported glycans"/>
</dbReference>
<dbReference type="VEuPathDB" id="PlasmoDB:PF3D7_0612700"/>
<dbReference type="VEuPathDB" id="PlasmoDB:Pf7G8-2_000165100"/>
<dbReference type="VEuPathDB" id="PlasmoDB:Pf7G8_060017700"/>
<dbReference type="VEuPathDB" id="PlasmoDB:PfCD01_060018200"/>
<dbReference type="VEuPathDB" id="PlasmoDB:PfDd2_060017600"/>
<dbReference type="VEuPathDB" id="PlasmoDB:PfGA01_060017600"/>
<dbReference type="VEuPathDB" id="PlasmoDB:PfGB4_060017300"/>
<dbReference type="VEuPathDB" id="PlasmoDB:PfGN01_060018500"/>
<dbReference type="VEuPathDB" id="PlasmoDB:PfHB3_060017000"/>
<dbReference type="VEuPathDB" id="PlasmoDB:PfIT_060016700"/>
<dbReference type="VEuPathDB" id="PlasmoDB:PfKE01_060018900"/>
<dbReference type="VEuPathDB" id="PlasmoDB:PfKH01_060019900"/>
<dbReference type="VEuPathDB" id="PlasmoDB:PfKH02_060019000"/>
<dbReference type="VEuPathDB" id="PlasmoDB:PfML01_060016700"/>
<dbReference type="VEuPathDB" id="PlasmoDB:PfNF135_060016900"/>
<dbReference type="VEuPathDB" id="PlasmoDB:PfNF166_060017300"/>
<dbReference type="VEuPathDB" id="PlasmoDB:PfNF54_060017600"/>
<dbReference type="VEuPathDB" id="PlasmoDB:PfSD01_060016700"/>
<dbReference type="VEuPathDB" id="PlasmoDB:PfSN01_060017700"/>
<dbReference type="VEuPathDB" id="PlasmoDB:PfTG01_060018200"/>
<dbReference type="EvolutionaryTrace" id="P19259"/>
<dbReference type="GO" id="GO:0009986">
    <property type="term" value="C:cell surface"/>
    <property type="evidence" value="ECO:0007669"/>
    <property type="project" value="UniProtKB-SubCell"/>
</dbReference>
<dbReference type="GO" id="GO:0005886">
    <property type="term" value="C:plasma membrane"/>
    <property type="evidence" value="ECO:0007669"/>
    <property type="project" value="UniProtKB-SubCell"/>
</dbReference>
<dbReference type="GO" id="GO:0098552">
    <property type="term" value="C:side of membrane"/>
    <property type="evidence" value="ECO:0007669"/>
    <property type="project" value="UniProtKB-KW"/>
</dbReference>
<dbReference type="FunFam" id="2.60.40.2860:FF:000017">
    <property type="entry name" value="Membrane protein PF12"/>
    <property type="match status" value="1"/>
</dbReference>
<dbReference type="FunFam" id="2.60.40.2860:FF:000018">
    <property type="entry name" value="Membrane protein pf12"/>
    <property type="match status" value="1"/>
</dbReference>
<dbReference type="Gene3D" id="2.60.40.2860">
    <property type="match status" value="2"/>
</dbReference>
<dbReference type="InterPro" id="IPR010884">
    <property type="entry name" value="6_CYS_dom"/>
</dbReference>
<dbReference type="InterPro" id="IPR038160">
    <property type="entry name" value="6_CYS_dom_sf"/>
</dbReference>
<dbReference type="InterPro" id="IPR051444">
    <property type="entry name" value="Parasite_Repro/Invasion_Surf"/>
</dbReference>
<dbReference type="PANTHER" id="PTHR38796">
    <property type="match status" value="1"/>
</dbReference>
<dbReference type="PANTHER" id="PTHR38796:SF1">
    <property type="entry name" value="ANCHORED PROTEIN, PUTATIVE (AFU_ORTHOLOGUE AFUA_4G09600)-RELATED"/>
    <property type="match status" value="1"/>
</dbReference>
<dbReference type="Pfam" id="PF07422">
    <property type="entry name" value="s48_45"/>
    <property type="match status" value="2"/>
</dbReference>
<dbReference type="SMART" id="SM00970">
    <property type="entry name" value="s48_45"/>
    <property type="match status" value="2"/>
</dbReference>
<dbReference type="PROSITE" id="PS51701">
    <property type="entry name" value="6_CYS"/>
    <property type="match status" value="2"/>
</dbReference>